<evidence type="ECO:0000255" key="1">
    <source>
        <dbReference type="PROSITE-ProRule" id="PRU00238"/>
    </source>
</evidence>
<name>HBB2_CYGMA</name>
<protein>
    <recommendedName>
        <fullName>Hemoglobin subunit beta-2</fullName>
    </recommendedName>
    <alternativeName>
        <fullName>Beta-2-globin</fullName>
    </alternativeName>
    <alternativeName>
        <fullName>Hemoglobin beta-2 chain</fullName>
    </alternativeName>
</protein>
<proteinExistence type="evidence at protein level"/>
<feature type="chain" id="PRO_0000052940" description="Hemoglobin subunit beta-2">
    <location>
        <begin position="1"/>
        <end position="146"/>
    </location>
</feature>
<feature type="domain" description="Globin" evidence="1">
    <location>
        <begin position="2"/>
        <end position="146"/>
    </location>
</feature>
<feature type="binding site" description="distal binding residue">
    <location>
        <position position="63"/>
    </location>
    <ligand>
        <name>heme b</name>
        <dbReference type="ChEBI" id="CHEBI:60344"/>
    </ligand>
    <ligandPart>
        <name>Fe</name>
        <dbReference type="ChEBI" id="CHEBI:18248"/>
    </ligandPart>
</feature>
<feature type="binding site" description="proximal binding residue">
    <location>
        <position position="92"/>
    </location>
    <ligand>
        <name>heme b</name>
        <dbReference type="ChEBI" id="CHEBI:60344"/>
    </ligand>
    <ligandPart>
        <name>Fe</name>
        <dbReference type="ChEBI" id="CHEBI:18248"/>
    </ligandPart>
</feature>
<organism>
    <name type="scientific">Cygnodraco mawsoni</name>
    <name type="common">Antarctic dragonfish</name>
    <dbReference type="NCBI Taxonomy" id="8216"/>
    <lineage>
        <taxon>Eukaryota</taxon>
        <taxon>Metazoa</taxon>
        <taxon>Chordata</taxon>
        <taxon>Craniata</taxon>
        <taxon>Vertebrata</taxon>
        <taxon>Euteleostomi</taxon>
        <taxon>Actinopterygii</taxon>
        <taxon>Neopterygii</taxon>
        <taxon>Teleostei</taxon>
        <taxon>Neoteleostei</taxon>
        <taxon>Acanthomorphata</taxon>
        <taxon>Eupercaria</taxon>
        <taxon>Perciformes</taxon>
        <taxon>Notothenioidei</taxon>
        <taxon>Bathydraconidae</taxon>
        <taxon>Cygnodraco</taxon>
    </lineage>
</organism>
<accession>P23018</accession>
<dbReference type="PIR" id="S16371">
    <property type="entry name" value="S16371"/>
</dbReference>
<dbReference type="SMR" id="P23018"/>
<dbReference type="GO" id="GO:0072562">
    <property type="term" value="C:blood microparticle"/>
    <property type="evidence" value="ECO:0007669"/>
    <property type="project" value="TreeGrafter"/>
</dbReference>
<dbReference type="GO" id="GO:0031838">
    <property type="term" value="C:haptoglobin-hemoglobin complex"/>
    <property type="evidence" value="ECO:0007669"/>
    <property type="project" value="TreeGrafter"/>
</dbReference>
<dbReference type="GO" id="GO:0005833">
    <property type="term" value="C:hemoglobin complex"/>
    <property type="evidence" value="ECO:0007669"/>
    <property type="project" value="InterPro"/>
</dbReference>
<dbReference type="GO" id="GO:0031720">
    <property type="term" value="F:haptoglobin binding"/>
    <property type="evidence" value="ECO:0007669"/>
    <property type="project" value="TreeGrafter"/>
</dbReference>
<dbReference type="GO" id="GO:0020037">
    <property type="term" value="F:heme binding"/>
    <property type="evidence" value="ECO:0007669"/>
    <property type="project" value="InterPro"/>
</dbReference>
<dbReference type="GO" id="GO:0046872">
    <property type="term" value="F:metal ion binding"/>
    <property type="evidence" value="ECO:0007669"/>
    <property type="project" value="UniProtKB-KW"/>
</dbReference>
<dbReference type="GO" id="GO:0043177">
    <property type="term" value="F:organic acid binding"/>
    <property type="evidence" value="ECO:0007669"/>
    <property type="project" value="TreeGrafter"/>
</dbReference>
<dbReference type="GO" id="GO:0019825">
    <property type="term" value="F:oxygen binding"/>
    <property type="evidence" value="ECO:0007669"/>
    <property type="project" value="InterPro"/>
</dbReference>
<dbReference type="GO" id="GO:0005344">
    <property type="term" value="F:oxygen carrier activity"/>
    <property type="evidence" value="ECO:0007669"/>
    <property type="project" value="UniProtKB-KW"/>
</dbReference>
<dbReference type="GO" id="GO:0004601">
    <property type="term" value="F:peroxidase activity"/>
    <property type="evidence" value="ECO:0007669"/>
    <property type="project" value="TreeGrafter"/>
</dbReference>
<dbReference type="GO" id="GO:0042744">
    <property type="term" value="P:hydrogen peroxide catabolic process"/>
    <property type="evidence" value="ECO:0007669"/>
    <property type="project" value="TreeGrafter"/>
</dbReference>
<dbReference type="CDD" id="cd08925">
    <property type="entry name" value="Hb-beta-like"/>
    <property type="match status" value="1"/>
</dbReference>
<dbReference type="FunFam" id="1.10.490.10:FF:000001">
    <property type="entry name" value="Hemoglobin subunit beta"/>
    <property type="match status" value="1"/>
</dbReference>
<dbReference type="Gene3D" id="1.10.490.10">
    <property type="entry name" value="Globins"/>
    <property type="match status" value="1"/>
</dbReference>
<dbReference type="InterPro" id="IPR000971">
    <property type="entry name" value="Globin"/>
</dbReference>
<dbReference type="InterPro" id="IPR009050">
    <property type="entry name" value="Globin-like_sf"/>
</dbReference>
<dbReference type="InterPro" id="IPR012292">
    <property type="entry name" value="Globin/Proto"/>
</dbReference>
<dbReference type="InterPro" id="IPR002337">
    <property type="entry name" value="Hemoglobin_b"/>
</dbReference>
<dbReference type="InterPro" id="IPR050056">
    <property type="entry name" value="Hemoglobin_oxygen_transport"/>
</dbReference>
<dbReference type="PANTHER" id="PTHR11442">
    <property type="entry name" value="HEMOGLOBIN FAMILY MEMBER"/>
    <property type="match status" value="1"/>
</dbReference>
<dbReference type="PANTHER" id="PTHR11442:SF7">
    <property type="entry name" value="HEMOGLOBIN SUBUNIT EPSILON"/>
    <property type="match status" value="1"/>
</dbReference>
<dbReference type="Pfam" id="PF00042">
    <property type="entry name" value="Globin"/>
    <property type="match status" value="1"/>
</dbReference>
<dbReference type="PRINTS" id="PR00814">
    <property type="entry name" value="BETAHAEM"/>
</dbReference>
<dbReference type="SUPFAM" id="SSF46458">
    <property type="entry name" value="Globin-like"/>
    <property type="match status" value="1"/>
</dbReference>
<dbReference type="PROSITE" id="PS01033">
    <property type="entry name" value="GLOBIN"/>
    <property type="match status" value="1"/>
</dbReference>
<gene>
    <name type="primary">hbb2</name>
</gene>
<comment type="function">
    <text>Involved in oxygen transport from gills to the various peripheral tissues.</text>
</comment>
<comment type="subunit">
    <text>Hb2 is a heterotetramer of two alpha chains and two beta-2 chains.</text>
</comment>
<comment type="tissue specificity">
    <text>Red blood cells.</text>
</comment>
<comment type="miscellaneous">
    <text>This fish has two hemoglobins: Hb1 (major) and Hb2 (about 5% of the total). They display the Bohr and root effects.</text>
</comment>
<comment type="similarity">
    <text evidence="1">Belongs to the globin family.</text>
</comment>
<reference key="1">
    <citation type="journal article" date="1991" name="Biochim. Biophys. Acta">
        <title>The hemoglobins of the cold-adapted Antarctic teleost Cygnodraco mawsoni.</title>
        <authorList>
            <person name="Caruso C."/>
            <person name="Rutigliano B."/>
            <person name="Romano M."/>
            <person name="di Prisco G."/>
        </authorList>
    </citation>
    <scope>PROTEIN SEQUENCE</scope>
</reference>
<sequence length="146" mass="16330">VEWTNFERATIKDIFSKLEYDVVGPATLARCLVVYPWTQRYFGKFGNLYNAAAIAENAMVSKHGTTIIHGLDQAVKNMDDIKNTYAELSVLHCDKLHVDPDNFQLLAECLTIVLAAQLGKEFTGEVQAAFQKFMAVVVSSLGKQYH</sequence>
<keyword id="KW-0903">Direct protein sequencing</keyword>
<keyword id="KW-0349">Heme</keyword>
<keyword id="KW-0408">Iron</keyword>
<keyword id="KW-0479">Metal-binding</keyword>
<keyword id="KW-0561">Oxygen transport</keyword>
<keyword id="KW-0813">Transport</keyword>